<organism>
    <name type="scientific">Prochlorococcus marinus (strain NATL1A)</name>
    <dbReference type="NCBI Taxonomy" id="167555"/>
    <lineage>
        <taxon>Bacteria</taxon>
        <taxon>Bacillati</taxon>
        <taxon>Cyanobacteriota</taxon>
        <taxon>Cyanophyceae</taxon>
        <taxon>Synechococcales</taxon>
        <taxon>Prochlorococcaceae</taxon>
        <taxon>Prochlorococcus</taxon>
    </lineage>
</organism>
<reference key="1">
    <citation type="journal article" date="2007" name="PLoS Genet.">
        <title>Patterns and implications of gene gain and loss in the evolution of Prochlorococcus.</title>
        <authorList>
            <person name="Kettler G.C."/>
            <person name="Martiny A.C."/>
            <person name="Huang K."/>
            <person name="Zucker J."/>
            <person name="Coleman M.L."/>
            <person name="Rodrigue S."/>
            <person name="Chen F."/>
            <person name="Lapidus A."/>
            <person name="Ferriera S."/>
            <person name="Johnson J."/>
            <person name="Steglich C."/>
            <person name="Church G.M."/>
            <person name="Richardson P."/>
            <person name="Chisholm S.W."/>
        </authorList>
    </citation>
    <scope>NUCLEOTIDE SEQUENCE [LARGE SCALE GENOMIC DNA]</scope>
    <source>
        <strain>NATL1A</strain>
    </source>
</reference>
<protein>
    <recommendedName>
        <fullName evidence="1">Aspartate carbamoyltransferase catalytic subunit</fullName>
        <ecNumber evidence="1">2.1.3.2</ecNumber>
    </recommendedName>
    <alternativeName>
        <fullName evidence="1">Aspartate transcarbamylase</fullName>
        <shortName evidence="1">ATCase</shortName>
    </alternativeName>
</protein>
<sequence length="339" mass="37947">MNNWKHNHVLDLSTFSLEDYKTVLELTTRFKDVHKSSSKKLPALHGRLIANLFFEPSTRTRTSFELAAKRLSADVQNFSVSSSSLSKGETPLDTILTYISMGADILVIRHESTNVPAELANYVDINNINTSILNAGDGFHSHPSQGLLDLFTLATFFNPNEPSTNSLLNKKITIVGDILHSRVARSNLWALTACGAEVTLCGPPSLLPEEFIDFVQNPRLGQNFDPINKRGSVFIKRSLKDALKNSDAVMTLRLQKERMKQNMLKDLDSYYAQYGITHESLKWCEKKVPVLHPGPVNRGVEISNRLVEDNSINLISKQVENGIPTRMALLYLLGLNKKD</sequence>
<accession>A2C066</accession>
<name>PYRB_PROM1</name>
<evidence type="ECO:0000255" key="1">
    <source>
        <dbReference type="HAMAP-Rule" id="MF_00001"/>
    </source>
</evidence>
<keyword id="KW-0665">Pyrimidine biosynthesis</keyword>
<keyword id="KW-0808">Transferase</keyword>
<gene>
    <name evidence="1" type="primary">pyrB</name>
    <name type="ordered locus">NATL1_03121</name>
</gene>
<proteinExistence type="inferred from homology"/>
<feature type="chain" id="PRO_0000301605" description="Aspartate carbamoyltransferase catalytic subunit">
    <location>
        <begin position="1"/>
        <end position="339"/>
    </location>
</feature>
<feature type="binding site" evidence="1">
    <location>
        <position position="59"/>
    </location>
    <ligand>
        <name>carbamoyl phosphate</name>
        <dbReference type="ChEBI" id="CHEBI:58228"/>
    </ligand>
</feature>
<feature type="binding site" evidence="1">
    <location>
        <position position="60"/>
    </location>
    <ligand>
        <name>carbamoyl phosphate</name>
        <dbReference type="ChEBI" id="CHEBI:58228"/>
    </ligand>
</feature>
<feature type="binding site" evidence="1">
    <location>
        <position position="87"/>
    </location>
    <ligand>
        <name>L-aspartate</name>
        <dbReference type="ChEBI" id="CHEBI:29991"/>
    </ligand>
</feature>
<feature type="binding site" evidence="1">
    <location>
        <position position="109"/>
    </location>
    <ligand>
        <name>carbamoyl phosphate</name>
        <dbReference type="ChEBI" id="CHEBI:58228"/>
    </ligand>
</feature>
<feature type="binding site" evidence="1">
    <location>
        <position position="142"/>
    </location>
    <ligand>
        <name>carbamoyl phosphate</name>
        <dbReference type="ChEBI" id="CHEBI:58228"/>
    </ligand>
</feature>
<feature type="binding site" evidence="1">
    <location>
        <position position="145"/>
    </location>
    <ligand>
        <name>carbamoyl phosphate</name>
        <dbReference type="ChEBI" id="CHEBI:58228"/>
    </ligand>
</feature>
<feature type="binding site" evidence="1">
    <location>
        <position position="182"/>
    </location>
    <ligand>
        <name>L-aspartate</name>
        <dbReference type="ChEBI" id="CHEBI:29991"/>
    </ligand>
</feature>
<feature type="binding site" evidence="1">
    <location>
        <position position="253"/>
    </location>
    <ligand>
        <name>L-aspartate</name>
        <dbReference type="ChEBI" id="CHEBI:29991"/>
    </ligand>
</feature>
<feature type="binding site" evidence="1">
    <location>
        <position position="294"/>
    </location>
    <ligand>
        <name>carbamoyl phosphate</name>
        <dbReference type="ChEBI" id="CHEBI:58228"/>
    </ligand>
</feature>
<feature type="binding site" evidence="1">
    <location>
        <position position="295"/>
    </location>
    <ligand>
        <name>carbamoyl phosphate</name>
        <dbReference type="ChEBI" id="CHEBI:58228"/>
    </ligand>
</feature>
<dbReference type="EC" id="2.1.3.2" evidence="1"/>
<dbReference type="EMBL" id="CP000553">
    <property type="protein sequence ID" value="ABM74876.1"/>
    <property type="molecule type" value="Genomic_DNA"/>
</dbReference>
<dbReference type="RefSeq" id="WP_011823086.1">
    <property type="nucleotide sequence ID" value="NC_008819.1"/>
</dbReference>
<dbReference type="SMR" id="A2C066"/>
<dbReference type="KEGG" id="pme:NATL1_03121"/>
<dbReference type="eggNOG" id="COG0540">
    <property type="taxonomic scope" value="Bacteria"/>
</dbReference>
<dbReference type="HOGENOM" id="CLU_043846_2_0_3"/>
<dbReference type="UniPathway" id="UPA00070">
    <property type="reaction ID" value="UER00116"/>
</dbReference>
<dbReference type="Proteomes" id="UP000002592">
    <property type="component" value="Chromosome"/>
</dbReference>
<dbReference type="GO" id="GO:0005829">
    <property type="term" value="C:cytosol"/>
    <property type="evidence" value="ECO:0007669"/>
    <property type="project" value="TreeGrafter"/>
</dbReference>
<dbReference type="GO" id="GO:0016597">
    <property type="term" value="F:amino acid binding"/>
    <property type="evidence" value="ECO:0007669"/>
    <property type="project" value="InterPro"/>
</dbReference>
<dbReference type="GO" id="GO:0004070">
    <property type="term" value="F:aspartate carbamoyltransferase activity"/>
    <property type="evidence" value="ECO:0007669"/>
    <property type="project" value="UniProtKB-UniRule"/>
</dbReference>
<dbReference type="GO" id="GO:0006207">
    <property type="term" value="P:'de novo' pyrimidine nucleobase biosynthetic process"/>
    <property type="evidence" value="ECO:0007669"/>
    <property type="project" value="InterPro"/>
</dbReference>
<dbReference type="GO" id="GO:0044205">
    <property type="term" value="P:'de novo' UMP biosynthetic process"/>
    <property type="evidence" value="ECO:0007669"/>
    <property type="project" value="UniProtKB-UniRule"/>
</dbReference>
<dbReference type="GO" id="GO:0006520">
    <property type="term" value="P:amino acid metabolic process"/>
    <property type="evidence" value="ECO:0007669"/>
    <property type="project" value="InterPro"/>
</dbReference>
<dbReference type="Gene3D" id="3.40.50.1370">
    <property type="entry name" value="Aspartate/ornithine carbamoyltransferase"/>
    <property type="match status" value="2"/>
</dbReference>
<dbReference type="HAMAP" id="MF_00001">
    <property type="entry name" value="Asp_carb_tr"/>
    <property type="match status" value="1"/>
</dbReference>
<dbReference type="InterPro" id="IPR006132">
    <property type="entry name" value="Asp/Orn_carbamoyltranf_P-bd"/>
</dbReference>
<dbReference type="InterPro" id="IPR006130">
    <property type="entry name" value="Asp/Orn_carbamoylTrfase"/>
</dbReference>
<dbReference type="InterPro" id="IPR036901">
    <property type="entry name" value="Asp/Orn_carbamoylTrfase_sf"/>
</dbReference>
<dbReference type="InterPro" id="IPR002082">
    <property type="entry name" value="Asp_carbamoyltransf"/>
</dbReference>
<dbReference type="InterPro" id="IPR006131">
    <property type="entry name" value="Asp_carbamoyltransf_Asp/Orn-bd"/>
</dbReference>
<dbReference type="NCBIfam" id="TIGR00670">
    <property type="entry name" value="asp_carb_tr"/>
    <property type="match status" value="1"/>
</dbReference>
<dbReference type="NCBIfam" id="NF002032">
    <property type="entry name" value="PRK00856.1"/>
    <property type="match status" value="1"/>
</dbReference>
<dbReference type="PANTHER" id="PTHR45753:SF6">
    <property type="entry name" value="ASPARTATE CARBAMOYLTRANSFERASE"/>
    <property type="match status" value="1"/>
</dbReference>
<dbReference type="PANTHER" id="PTHR45753">
    <property type="entry name" value="ORNITHINE CARBAMOYLTRANSFERASE, MITOCHONDRIAL"/>
    <property type="match status" value="1"/>
</dbReference>
<dbReference type="Pfam" id="PF00185">
    <property type="entry name" value="OTCace"/>
    <property type="match status" value="1"/>
</dbReference>
<dbReference type="Pfam" id="PF02729">
    <property type="entry name" value="OTCace_N"/>
    <property type="match status" value="1"/>
</dbReference>
<dbReference type="PRINTS" id="PR00100">
    <property type="entry name" value="AOTCASE"/>
</dbReference>
<dbReference type="PRINTS" id="PR00101">
    <property type="entry name" value="ATCASE"/>
</dbReference>
<dbReference type="SUPFAM" id="SSF53671">
    <property type="entry name" value="Aspartate/ornithine carbamoyltransferase"/>
    <property type="match status" value="1"/>
</dbReference>
<dbReference type="PROSITE" id="PS00097">
    <property type="entry name" value="CARBAMOYLTRANSFERASE"/>
    <property type="match status" value="1"/>
</dbReference>
<comment type="function">
    <text evidence="1">Catalyzes the condensation of carbamoyl phosphate and aspartate to form carbamoyl aspartate and inorganic phosphate, the committed step in the de novo pyrimidine nucleotide biosynthesis pathway.</text>
</comment>
<comment type="catalytic activity">
    <reaction evidence="1">
        <text>carbamoyl phosphate + L-aspartate = N-carbamoyl-L-aspartate + phosphate + H(+)</text>
        <dbReference type="Rhea" id="RHEA:20013"/>
        <dbReference type="ChEBI" id="CHEBI:15378"/>
        <dbReference type="ChEBI" id="CHEBI:29991"/>
        <dbReference type="ChEBI" id="CHEBI:32814"/>
        <dbReference type="ChEBI" id="CHEBI:43474"/>
        <dbReference type="ChEBI" id="CHEBI:58228"/>
        <dbReference type="EC" id="2.1.3.2"/>
    </reaction>
</comment>
<comment type="pathway">
    <text evidence="1">Pyrimidine metabolism; UMP biosynthesis via de novo pathway; (S)-dihydroorotate from bicarbonate: step 2/3.</text>
</comment>
<comment type="subunit">
    <text evidence="1">Heterododecamer (2C3:3R2) of six catalytic PyrB chains organized as two trimers (C3), and six regulatory PyrI chains organized as three dimers (R2).</text>
</comment>
<comment type="similarity">
    <text evidence="1">Belongs to the aspartate/ornithine carbamoyltransferase superfamily. ATCase family.</text>
</comment>